<gene>
    <name type="primary">MT-CYB</name>
    <name type="synonym">COB</name>
    <name type="synonym">CYTB</name>
    <name type="synonym">MTCYB</name>
</gene>
<evidence type="ECO:0000250" key="1"/>
<evidence type="ECO:0000250" key="2">
    <source>
        <dbReference type="UniProtKB" id="P00157"/>
    </source>
</evidence>
<evidence type="ECO:0000255" key="3">
    <source>
        <dbReference type="PROSITE-ProRule" id="PRU00967"/>
    </source>
</evidence>
<evidence type="ECO:0000255" key="4">
    <source>
        <dbReference type="PROSITE-ProRule" id="PRU00968"/>
    </source>
</evidence>
<evidence type="ECO:0000305" key="5"/>
<proteinExistence type="inferred from homology"/>
<keyword id="KW-0249">Electron transport</keyword>
<keyword id="KW-0349">Heme</keyword>
<keyword id="KW-0408">Iron</keyword>
<keyword id="KW-0472">Membrane</keyword>
<keyword id="KW-0479">Metal-binding</keyword>
<keyword id="KW-0496">Mitochondrion</keyword>
<keyword id="KW-0999">Mitochondrion inner membrane</keyword>
<keyword id="KW-1185">Reference proteome</keyword>
<keyword id="KW-0679">Respiratory chain</keyword>
<keyword id="KW-0812">Transmembrane</keyword>
<keyword id="KW-1133">Transmembrane helix</keyword>
<keyword id="KW-0813">Transport</keyword>
<keyword id="KW-0830">Ubiquinone</keyword>
<reference key="1">
    <citation type="journal article" date="1996" name="Mol. Phylogenet. Evol.">
        <title>A phylogeny of the bears (Ursidae) inferred from complete sequences of three mitochondrial genes.</title>
        <authorList>
            <person name="Talbot S.L."/>
            <person name="Shields G.F."/>
        </authorList>
    </citation>
    <scope>NUCLEOTIDE SEQUENCE [GENOMIC DNA]</scope>
</reference>
<reference key="2">
    <citation type="journal article" date="2007" name="Gene">
        <title>The complete mitochondrial genome and phylogenetic analysis of the giant panda (Ailuropoda melanoleuca).</title>
        <authorList>
            <person name="Peng R."/>
            <person name="Zeng B."/>
            <person name="Meng X."/>
            <person name="Yue B."/>
            <person name="Zhang Z."/>
            <person name="Zou F."/>
        </authorList>
    </citation>
    <scope>NUCLEOTIDE SEQUENCE [LARGE SCALE GENOMIC DNA]</scope>
</reference>
<name>CYB_AILME</name>
<feature type="chain" id="PRO_0000060538" description="Cytochrome b">
    <location>
        <begin position="1"/>
        <end position="379"/>
    </location>
</feature>
<feature type="transmembrane region" description="Helical" evidence="2">
    <location>
        <begin position="33"/>
        <end position="53"/>
    </location>
</feature>
<feature type="transmembrane region" description="Helical" evidence="2">
    <location>
        <begin position="77"/>
        <end position="98"/>
    </location>
</feature>
<feature type="transmembrane region" description="Helical" evidence="2">
    <location>
        <begin position="113"/>
        <end position="133"/>
    </location>
</feature>
<feature type="transmembrane region" description="Helical" evidence="2">
    <location>
        <begin position="178"/>
        <end position="198"/>
    </location>
</feature>
<feature type="transmembrane region" description="Helical" evidence="2">
    <location>
        <begin position="226"/>
        <end position="246"/>
    </location>
</feature>
<feature type="transmembrane region" description="Helical" evidence="2">
    <location>
        <begin position="288"/>
        <end position="308"/>
    </location>
</feature>
<feature type="transmembrane region" description="Helical" evidence="2">
    <location>
        <begin position="320"/>
        <end position="340"/>
    </location>
</feature>
<feature type="transmembrane region" description="Helical" evidence="2">
    <location>
        <begin position="347"/>
        <end position="367"/>
    </location>
</feature>
<feature type="binding site" description="axial binding residue" evidence="2">
    <location>
        <position position="83"/>
    </location>
    <ligand>
        <name>heme b</name>
        <dbReference type="ChEBI" id="CHEBI:60344"/>
        <label>b562</label>
    </ligand>
    <ligandPart>
        <name>Fe</name>
        <dbReference type="ChEBI" id="CHEBI:18248"/>
    </ligandPart>
</feature>
<feature type="binding site" description="axial binding residue" evidence="2">
    <location>
        <position position="97"/>
    </location>
    <ligand>
        <name>heme b</name>
        <dbReference type="ChEBI" id="CHEBI:60344"/>
        <label>b566</label>
    </ligand>
    <ligandPart>
        <name>Fe</name>
        <dbReference type="ChEBI" id="CHEBI:18248"/>
    </ligandPart>
</feature>
<feature type="binding site" description="axial binding residue" evidence="2">
    <location>
        <position position="182"/>
    </location>
    <ligand>
        <name>heme b</name>
        <dbReference type="ChEBI" id="CHEBI:60344"/>
        <label>b562</label>
    </ligand>
    <ligandPart>
        <name>Fe</name>
        <dbReference type="ChEBI" id="CHEBI:18248"/>
    </ligandPart>
</feature>
<feature type="binding site" description="axial binding residue" evidence="2">
    <location>
        <position position="196"/>
    </location>
    <ligand>
        <name>heme b</name>
        <dbReference type="ChEBI" id="CHEBI:60344"/>
        <label>b566</label>
    </ligand>
    <ligandPart>
        <name>Fe</name>
        <dbReference type="ChEBI" id="CHEBI:18248"/>
    </ligandPart>
</feature>
<feature type="binding site" evidence="2">
    <location>
        <position position="201"/>
    </location>
    <ligand>
        <name>a ubiquinone</name>
        <dbReference type="ChEBI" id="CHEBI:16389"/>
    </ligand>
</feature>
<feature type="sequence conflict" description="In Ref. 1; AAB50498." evidence="5" ref="1">
    <original>V</original>
    <variation>I</variation>
    <location>
        <position position="123"/>
    </location>
</feature>
<feature type="sequence conflict" description="In Ref. 1; AAB50498." evidence="5" ref="1">
    <original>V</original>
    <variation>I</variation>
    <location>
        <position position="164"/>
    </location>
</feature>
<feature type="sequence conflict" description="In Ref. 1; AAB50498." evidence="5" ref="1">
    <original>A</original>
    <variation>T</variation>
    <location>
        <position position="264"/>
    </location>
</feature>
<accession>Q33784</accession>
<accession>A5JFK8</accession>
<protein>
    <recommendedName>
        <fullName>Cytochrome b</fullName>
    </recommendedName>
    <alternativeName>
        <fullName>Complex III subunit 3</fullName>
    </alternativeName>
    <alternativeName>
        <fullName>Complex III subunit III</fullName>
    </alternativeName>
    <alternativeName>
        <fullName>Cytochrome b-c1 complex subunit 3</fullName>
    </alternativeName>
    <alternativeName>
        <fullName>Ubiquinol-cytochrome-c reductase complex cytochrome b subunit</fullName>
    </alternativeName>
</protein>
<geneLocation type="mitochondrion"/>
<dbReference type="EMBL" id="U23552">
    <property type="protein sequence ID" value="AAB50498.1"/>
    <property type="molecule type" value="Genomic_DNA"/>
</dbReference>
<dbReference type="EMBL" id="EF212882">
    <property type="protein sequence ID" value="ABP38222.1"/>
    <property type="molecule type" value="Genomic_DNA"/>
</dbReference>
<dbReference type="RefSeq" id="YP_001249296.1">
    <property type="nucleotide sequence ID" value="NC_009492.1"/>
</dbReference>
<dbReference type="SMR" id="Q33784"/>
<dbReference type="FunCoup" id="Q33784">
    <property type="interactions" value="12"/>
</dbReference>
<dbReference type="STRING" id="9646.ENSAMEP00000021365"/>
<dbReference type="GeneID" id="5179733"/>
<dbReference type="KEGG" id="aml:5179733"/>
<dbReference type="CTD" id="4519"/>
<dbReference type="eggNOG" id="KOG4663">
    <property type="taxonomic scope" value="Eukaryota"/>
</dbReference>
<dbReference type="HOGENOM" id="CLU_031114_3_0_1"/>
<dbReference type="InParanoid" id="Q33784"/>
<dbReference type="OMA" id="NISAWWN"/>
<dbReference type="OrthoDB" id="244at2759"/>
<dbReference type="TreeFam" id="TF353088"/>
<dbReference type="Proteomes" id="UP000008912">
    <property type="component" value="Mitochondrion"/>
</dbReference>
<dbReference type="GO" id="GO:0005743">
    <property type="term" value="C:mitochondrial inner membrane"/>
    <property type="evidence" value="ECO:0007669"/>
    <property type="project" value="UniProtKB-SubCell"/>
</dbReference>
<dbReference type="GO" id="GO:0045275">
    <property type="term" value="C:respiratory chain complex III"/>
    <property type="evidence" value="ECO:0007669"/>
    <property type="project" value="InterPro"/>
</dbReference>
<dbReference type="GO" id="GO:0046872">
    <property type="term" value="F:metal ion binding"/>
    <property type="evidence" value="ECO:0007669"/>
    <property type="project" value="UniProtKB-KW"/>
</dbReference>
<dbReference type="GO" id="GO:0008121">
    <property type="term" value="F:ubiquinol-cytochrome-c reductase activity"/>
    <property type="evidence" value="ECO:0007669"/>
    <property type="project" value="InterPro"/>
</dbReference>
<dbReference type="GO" id="GO:0006122">
    <property type="term" value="P:mitochondrial electron transport, ubiquinol to cytochrome c"/>
    <property type="evidence" value="ECO:0007669"/>
    <property type="project" value="TreeGrafter"/>
</dbReference>
<dbReference type="CDD" id="cd00290">
    <property type="entry name" value="cytochrome_b_C"/>
    <property type="match status" value="1"/>
</dbReference>
<dbReference type="CDD" id="cd00284">
    <property type="entry name" value="Cytochrome_b_N"/>
    <property type="match status" value="1"/>
</dbReference>
<dbReference type="FunFam" id="1.20.810.10:FF:000002">
    <property type="entry name" value="Cytochrome b"/>
    <property type="match status" value="1"/>
</dbReference>
<dbReference type="Gene3D" id="1.20.810.10">
    <property type="entry name" value="Cytochrome Bc1 Complex, Chain C"/>
    <property type="match status" value="1"/>
</dbReference>
<dbReference type="InterPro" id="IPR005798">
    <property type="entry name" value="Cyt_b/b6_C"/>
</dbReference>
<dbReference type="InterPro" id="IPR036150">
    <property type="entry name" value="Cyt_b/b6_C_sf"/>
</dbReference>
<dbReference type="InterPro" id="IPR005797">
    <property type="entry name" value="Cyt_b/b6_N"/>
</dbReference>
<dbReference type="InterPro" id="IPR027387">
    <property type="entry name" value="Cytb/b6-like_sf"/>
</dbReference>
<dbReference type="InterPro" id="IPR030689">
    <property type="entry name" value="Cytochrome_b"/>
</dbReference>
<dbReference type="InterPro" id="IPR048260">
    <property type="entry name" value="Cytochrome_b_C_euk/bac"/>
</dbReference>
<dbReference type="InterPro" id="IPR048259">
    <property type="entry name" value="Cytochrome_b_N_euk/bac"/>
</dbReference>
<dbReference type="InterPro" id="IPR016174">
    <property type="entry name" value="Di-haem_cyt_TM"/>
</dbReference>
<dbReference type="PANTHER" id="PTHR19271">
    <property type="entry name" value="CYTOCHROME B"/>
    <property type="match status" value="1"/>
</dbReference>
<dbReference type="PANTHER" id="PTHR19271:SF16">
    <property type="entry name" value="CYTOCHROME B"/>
    <property type="match status" value="1"/>
</dbReference>
<dbReference type="Pfam" id="PF00032">
    <property type="entry name" value="Cytochrom_B_C"/>
    <property type="match status" value="1"/>
</dbReference>
<dbReference type="Pfam" id="PF00033">
    <property type="entry name" value="Cytochrome_B"/>
    <property type="match status" value="1"/>
</dbReference>
<dbReference type="PIRSF" id="PIRSF038885">
    <property type="entry name" value="COB"/>
    <property type="match status" value="1"/>
</dbReference>
<dbReference type="SUPFAM" id="SSF81648">
    <property type="entry name" value="a domain/subunit of cytochrome bc1 complex (Ubiquinol-cytochrome c reductase)"/>
    <property type="match status" value="1"/>
</dbReference>
<dbReference type="SUPFAM" id="SSF81342">
    <property type="entry name" value="Transmembrane di-heme cytochromes"/>
    <property type="match status" value="1"/>
</dbReference>
<dbReference type="PROSITE" id="PS51003">
    <property type="entry name" value="CYTB_CTER"/>
    <property type="match status" value="1"/>
</dbReference>
<dbReference type="PROSITE" id="PS51002">
    <property type="entry name" value="CYTB_NTER"/>
    <property type="match status" value="1"/>
</dbReference>
<sequence length="379" mass="42645">MINIRKTHPLVKIINNSFIDLPTPSNISTWWNFGSLLGVCLILQILTGLFLAMHYTSDTATAFSSVAHICRDVNYGWFIRYMHANGASMFFICLFMHVGRGLYYGSYLFPETWNIGIILLLTVMATAFMGYVLPWGQMSFWGATVITNLLSAIPYIGTNLVEWVWGGFSVDKATLTRFFAFHFILPFIISALAMVHLLFLHETGSNNPSGIPSDPDKIPFYPYHTIKDILGVLFLVLALMTLALFSPDLLGDPDNYTPANPLSAPPHIKPEWYFLFAYAILRSIPNKLGGVLALIFSILILTIIPLLHTSKQRSMMFRPLSQCLFWLLVADLLTLTWIGGQPVEHPFIIIGQLASILYFTILLVLMPITSIIENSLSKW</sequence>
<comment type="function">
    <text evidence="2">Component of the ubiquinol-cytochrome c reductase complex (complex III or cytochrome b-c1 complex) that is part of the mitochondrial respiratory chain. The b-c1 complex mediates electron transfer from ubiquinol to cytochrome c. Contributes to the generation of a proton gradient across the mitochondrial membrane that is then used for ATP synthesis.</text>
</comment>
<comment type="cofactor">
    <cofactor evidence="2">
        <name>heme b</name>
        <dbReference type="ChEBI" id="CHEBI:60344"/>
    </cofactor>
    <text evidence="2">Binds 2 heme b groups non-covalently.</text>
</comment>
<comment type="subunit">
    <text evidence="2">The cytochrome bc1 complex contains 11 subunits: 3 respiratory subunits (MT-CYB, CYC1 and UQCRFS1), 2 core proteins (UQCRC1 and UQCRC2) and 6 low-molecular weight proteins (UQCRH/QCR6, UQCRB/QCR7, UQCRQ/QCR8, UQCR10/QCR9, UQCR11/QCR10 and a cleavage product of UQCRFS1). This cytochrome bc1 complex then forms a dimer.</text>
</comment>
<comment type="subcellular location">
    <subcellularLocation>
        <location evidence="2">Mitochondrion inner membrane</location>
        <topology evidence="2">Multi-pass membrane protein</topology>
    </subcellularLocation>
</comment>
<comment type="miscellaneous">
    <text evidence="1">Heme 1 (or BL or b562) is low-potential and absorbs at about 562 nm, and heme 2 (or BH or b566) is high-potential and absorbs at about 566 nm.</text>
</comment>
<comment type="similarity">
    <text evidence="3 4">Belongs to the cytochrome b family.</text>
</comment>
<comment type="caution">
    <text evidence="2">The full-length protein contains only eight transmembrane helices, not nine as predicted by bioinformatics tools.</text>
</comment>
<organism>
    <name type="scientific">Ailuropoda melanoleuca</name>
    <name type="common">Giant panda</name>
    <dbReference type="NCBI Taxonomy" id="9646"/>
    <lineage>
        <taxon>Eukaryota</taxon>
        <taxon>Metazoa</taxon>
        <taxon>Chordata</taxon>
        <taxon>Craniata</taxon>
        <taxon>Vertebrata</taxon>
        <taxon>Euteleostomi</taxon>
        <taxon>Mammalia</taxon>
        <taxon>Eutheria</taxon>
        <taxon>Laurasiatheria</taxon>
        <taxon>Carnivora</taxon>
        <taxon>Caniformia</taxon>
        <taxon>Ursidae</taxon>
        <taxon>Ailuropoda</taxon>
    </lineage>
</organism>